<feature type="chain" id="PRO_0000399701" description="Altered inheritance of mitochondria protein 32">
    <location>
        <begin position="1"/>
        <end position="311"/>
    </location>
</feature>
<evidence type="ECO:0000305" key="1"/>
<protein>
    <recommendedName>
        <fullName>Altered inheritance of mitochondria protein 32</fullName>
    </recommendedName>
</protein>
<sequence length="311" mass="35794">MLRTTVRTLQQQAFLHHSFERVSLPELHSTIKDVQTTCYCQNINARLPSTTDPLDPQIRLSDRTPYYNKHVLLVSPGDKFAQPWKIAWNHNLDTNLNRPYNAISKLRSYLGKSPGILINAVHLQNDFIPRPKEDDEWLFFFVIPDMKLYKISETDLEQFASFLNEGVVQAPRLSFQDYLIGKARVPQETHKVHHKNLTKFQGDILLRDWSLVCGHYKRDAKCGEMGPDIIAAFQDEKLLTDNNLGLISHVGGHVFAGNVIFYKLFKAENALNKLDSLWFGKVYPHNLKLLCENLENGKIIDEMYRGGISMN</sequence>
<comment type="similarity">
    <text evidence="1">Belongs to the AIM32 family.</text>
</comment>
<dbReference type="EMBL" id="GU299178">
    <property type="protein sequence ID" value="ADD21421.1"/>
    <property type="molecule type" value="Genomic_DNA"/>
</dbReference>
<dbReference type="SMR" id="D3XDD3"/>
<dbReference type="CDD" id="cd03062">
    <property type="entry name" value="TRX_Fd_Sucrase"/>
    <property type="match status" value="1"/>
</dbReference>
<dbReference type="InterPro" id="IPR009737">
    <property type="entry name" value="Aim32/Apd1-like"/>
</dbReference>
<dbReference type="InterPro" id="IPR036249">
    <property type="entry name" value="Thioredoxin-like_sf"/>
</dbReference>
<dbReference type="PANTHER" id="PTHR31902">
    <property type="entry name" value="ACTIN PATCHES DISTAL PROTEIN 1"/>
    <property type="match status" value="1"/>
</dbReference>
<dbReference type="PANTHER" id="PTHR31902:SF7">
    <property type="entry name" value="ALTERED INHERITANCE OF MITOCHONDRIA PROTEIN 32"/>
    <property type="match status" value="1"/>
</dbReference>
<dbReference type="Pfam" id="PF06999">
    <property type="entry name" value="Suc_Fer-like"/>
    <property type="match status" value="1"/>
</dbReference>
<dbReference type="SUPFAM" id="SSF52833">
    <property type="entry name" value="Thioredoxin-like"/>
    <property type="match status" value="1"/>
</dbReference>
<gene>
    <name type="primary">AIM32</name>
</gene>
<proteinExistence type="inferred from homology"/>
<accession>D3XDD3</accession>
<reference key="1">
    <citation type="journal article" date="2010" name="Nature">
        <title>Remarkably ancient balanced polymorphisms in a multi-locus gene network.</title>
        <authorList>
            <person name="Hittinger C.T."/>
            <person name="Goncalves P."/>
            <person name="Sampaio J.P."/>
            <person name="Dover J."/>
            <person name="Johnston M."/>
            <person name="Rokas A."/>
        </authorList>
    </citation>
    <scope>NUCLEOTIDE SEQUENCE [GENOMIC DNA]</scope>
    <source>
        <strain>ZP591</strain>
    </source>
</reference>
<organism>
    <name type="scientific">Saccharomyces kudriavzevii</name>
    <name type="common">Yeast</name>
    <dbReference type="NCBI Taxonomy" id="114524"/>
    <lineage>
        <taxon>Eukaryota</taxon>
        <taxon>Fungi</taxon>
        <taxon>Dikarya</taxon>
        <taxon>Ascomycota</taxon>
        <taxon>Saccharomycotina</taxon>
        <taxon>Saccharomycetes</taxon>
        <taxon>Saccharomycetales</taxon>
        <taxon>Saccharomycetaceae</taxon>
        <taxon>Saccharomyces</taxon>
    </lineage>
</organism>
<name>AIM32_SACKU</name>